<feature type="chain" id="PRO_0000122727" description="Protein RecA">
    <location>
        <begin position="1"/>
        <end position="351"/>
    </location>
</feature>
<feature type="binding site" evidence="1">
    <location>
        <begin position="73"/>
        <end position="80"/>
    </location>
    <ligand>
        <name>ATP</name>
        <dbReference type="ChEBI" id="CHEBI:30616"/>
    </ligand>
</feature>
<keyword id="KW-0067">ATP-binding</keyword>
<keyword id="KW-0963">Cytoplasm</keyword>
<keyword id="KW-0227">DNA damage</keyword>
<keyword id="KW-0233">DNA recombination</keyword>
<keyword id="KW-0234">DNA repair</keyword>
<keyword id="KW-0238">DNA-binding</keyword>
<keyword id="KW-0547">Nucleotide-binding</keyword>
<keyword id="KW-0742">SOS response</keyword>
<protein>
    <recommendedName>
        <fullName evidence="1">Protein RecA</fullName>
    </recommendedName>
    <alternativeName>
        <fullName evidence="1">Recombinase A</fullName>
    </alternativeName>
</protein>
<dbReference type="EMBL" id="AF297289">
    <property type="protein sequence ID" value="AAG13409.2"/>
    <property type="molecule type" value="Genomic_DNA"/>
</dbReference>
<dbReference type="RefSeq" id="WP_013232692.1">
    <property type="nucleotide sequence ID" value="NZ_JWZZ01000002.1"/>
</dbReference>
<dbReference type="SMR" id="Q9F672"/>
<dbReference type="GeneID" id="29392362"/>
<dbReference type="KEGG" id="hsz:ACP92_03270"/>
<dbReference type="PATRIC" id="fig|964.11.peg.677"/>
<dbReference type="OMA" id="DSKMGLH"/>
<dbReference type="GO" id="GO:0005829">
    <property type="term" value="C:cytosol"/>
    <property type="evidence" value="ECO:0007669"/>
    <property type="project" value="TreeGrafter"/>
</dbReference>
<dbReference type="GO" id="GO:0005524">
    <property type="term" value="F:ATP binding"/>
    <property type="evidence" value="ECO:0007669"/>
    <property type="project" value="UniProtKB-UniRule"/>
</dbReference>
<dbReference type="GO" id="GO:0016887">
    <property type="term" value="F:ATP hydrolysis activity"/>
    <property type="evidence" value="ECO:0007669"/>
    <property type="project" value="InterPro"/>
</dbReference>
<dbReference type="GO" id="GO:0140664">
    <property type="term" value="F:ATP-dependent DNA damage sensor activity"/>
    <property type="evidence" value="ECO:0007669"/>
    <property type="project" value="InterPro"/>
</dbReference>
<dbReference type="GO" id="GO:0003684">
    <property type="term" value="F:damaged DNA binding"/>
    <property type="evidence" value="ECO:0007669"/>
    <property type="project" value="UniProtKB-UniRule"/>
</dbReference>
<dbReference type="GO" id="GO:0003697">
    <property type="term" value="F:single-stranded DNA binding"/>
    <property type="evidence" value="ECO:0007669"/>
    <property type="project" value="UniProtKB-UniRule"/>
</dbReference>
<dbReference type="GO" id="GO:0006310">
    <property type="term" value="P:DNA recombination"/>
    <property type="evidence" value="ECO:0007669"/>
    <property type="project" value="UniProtKB-UniRule"/>
</dbReference>
<dbReference type="GO" id="GO:0006281">
    <property type="term" value="P:DNA repair"/>
    <property type="evidence" value="ECO:0007669"/>
    <property type="project" value="UniProtKB-UniRule"/>
</dbReference>
<dbReference type="GO" id="GO:0009432">
    <property type="term" value="P:SOS response"/>
    <property type="evidence" value="ECO:0007669"/>
    <property type="project" value="UniProtKB-UniRule"/>
</dbReference>
<dbReference type="CDD" id="cd00983">
    <property type="entry name" value="RecA"/>
    <property type="match status" value="1"/>
</dbReference>
<dbReference type="FunFam" id="3.40.50.300:FF:000087">
    <property type="entry name" value="Recombinase RecA"/>
    <property type="match status" value="1"/>
</dbReference>
<dbReference type="Gene3D" id="3.40.50.300">
    <property type="entry name" value="P-loop containing nucleotide triphosphate hydrolases"/>
    <property type="match status" value="1"/>
</dbReference>
<dbReference type="HAMAP" id="MF_00268">
    <property type="entry name" value="RecA"/>
    <property type="match status" value="1"/>
</dbReference>
<dbReference type="InterPro" id="IPR003593">
    <property type="entry name" value="AAA+_ATPase"/>
</dbReference>
<dbReference type="InterPro" id="IPR013765">
    <property type="entry name" value="DNA_recomb/repair_RecA"/>
</dbReference>
<dbReference type="InterPro" id="IPR020584">
    <property type="entry name" value="DNA_recomb/repair_RecA_CS"/>
</dbReference>
<dbReference type="InterPro" id="IPR027417">
    <property type="entry name" value="P-loop_NTPase"/>
</dbReference>
<dbReference type="InterPro" id="IPR049261">
    <property type="entry name" value="RecA-like_C"/>
</dbReference>
<dbReference type="InterPro" id="IPR049428">
    <property type="entry name" value="RecA-like_N"/>
</dbReference>
<dbReference type="InterPro" id="IPR020588">
    <property type="entry name" value="RecA_ATP-bd"/>
</dbReference>
<dbReference type="InterPro" id="IPR023400">
    <property type="entry name" value="RecA_C_sf"/>
</dbReference>
<dbReference type="InterPro" id="IPR020587">
    <property type="entry name" value="RecA_monomer-monomer_interface"/>
</dbReference>
<dbReference type="NCBIfam" id="TIGR02012">
    <property type="entry name" value="tigrfam_recA"/>
    <property type="match status" value="1"/>
</dbReference>
<dbReference type="PANTHER" id="PTHR45900:SF1">
    <property type="entry name" value="MITOCHONDRIAL DNA REPAIR PROTEIN RECA HOMOLOG-RELATED"/>
    <property type="match status" value="1"/>
</dbReference>
<dbReference type="PANTHER" id="PTHR45900">
    <property type="entry name" value="RECA"/>
    <property type="match status" value="1"/>
</dbReference>
<dbReference type="Pfam" id="PF00154">
    <property type="entry name" value="RecA"/>
    <property type="match status" value="1"/>
</dbReference>
<dbReference type="Pfam" id="PF21096">
    <property type="entry name" value="RecA_C"/>
    <property type="match status" value="1"/>
</dbReference>
<dbReference type="PRINTS" id="PR00142">
    <property type="entry name" value="RECA"/>
</dbReference>
<dbReference type="SMART" id="SM00382">
    <property type="entry name" value="AAA"/>
    <property type="match status" value="1"/>
</dbReference>
<dbReference type="SUPFAM" id="SSF52540">
    <property type="entry name" value="P-loop containing nucleoside triphosphate hydrolases"/>
    <property type="match status" value="1"/>
</dbReference>
<dbReference type="SUPFAM" id="SSF54752">
    <property type="entry name" value="RecA protein, C-terminal domain"/>
    <property type="match status" value="1"/>
</dbReference>
<dbReference type="PROSITE" id="PS00321">
    <property type="entry name" value="RECA_1"/>
    <property type="match status" value="1"/>
</dbReference>
<dbReference type="PROSITE" id="PS50162">
    <property type="entry name" value="RECA_2"/>
    <property type="match status" value="1"/>
</dbReference>
<dbReference type="PROSITE" id="PS50163">
    <property type="entry name" value="RECA_3"/>
    <property type="match status" value="1"/>
</dbReference>
<sequence length="351" mass="37472">MDDKKAANNSEKSKALAAALAQIEKQFGKGSVMRMEDGVIAEEIQAVSTGSLGLDIALGIGGLPRGRVIEIYGPESSGKTTLTLQSIAEMQKLGGTCAFIDAEHALDVTYAQKLGVNLNDLLISQPDTGEQALEICDALVRSGAVDLIVVDSVAALTPKAEIEGDMGDSLPGLQARLMSQALRKLTGSINRTNTTVIFINQIRMKIGVMFGNPETTTGGNALKFYASVRLDIRRTGSIKSGDEVIGSETKVKVVKNKVAPPFREAHFDILYGEGTSREGEILDLGSEHKVVEKSGAWYSYNGERIGQGKDNARNYLKEHPELAREIENKVRVALGVPELAGGEAEAEAKAS</sequence>
<comment type="function">
    <text evidence="1">Can catalyze the hydrolysis of ATP in the presence of single-stranded DNA, the ATP-dependent uptake of single-stranded DNA by duplex DNA, and the ATP-dependent hybridization of homologous single-stranded DNAs. It interacts with LexA causing its activation and leading to its autocatalytic cleavage.</text>
</comment>
<comment type="subcellular location">
    <subcellularLocation>
        <location evidence="1">Cytoplasm</location>
    </subcellularLocation>
</comment>
<comment type="induction">
    <text evidence="2">By methyl methanesulfonate.</text>
</comment>
<comment type="similarity">
    <text evidence="1">Belongs to the RecA family.</text>
</comment>
<gene>
    <name evidence="1" type="primary">recA</name>
</gene>
<accession>Q9F672</accession>
<name>RECA_HERSE</name>
<organism>
    <name type="scientific">Herbaspirillum seropedicae</name>
    <dbReference type="NCBI Taxonomy" id="964"/>
    <lineage>
        <taxon>Bacteria</taxon>
        <taxon>Pseudomonadati</taxon>
        <taxon>Pseudomonadota</taxon>
        <taxon>Betaproteobacteria</taxon>
        <taxon>Burkholderiales</taxon>
        <taxon>Oxalobacteraceae</taxon>
        <taxon>Herbaspirillum</taxon>
    </lineage>
</organism>
<proteinExistence type="evidence at transcript level"/>
<evidence type="ECO:0000255" key="1">
    <source>
        <dbReference type="HAMAP-Rule" id="MF_00268"/>
    </source>
</evidence>
<evidence type="ECO:0000269" key="2">
    <source>
    </source>
</evidence>
<reference key="1">
    <citation type="journal article" date="2003" name="Can. J. Microbiol.">
        <title>The recX gene product is involved in the SOS response in Herbaspirillum seropedicae.</title>
        <authorList>
            <person name="Galvao C.W."/>
            <person name="Pedrosa F.O."/>
            <person name="Souza E.M."/>
            <person name="Yates M.G."/>
            <person name="Chubatsu L.S."/>
            <person name="Steffens M.B.R."/>
        </authorList>
    </citation>
    <scope>NUCLEOTIDE SEQUENCE [GENOMIC DNA]</scope>
    <scope>INDUCTION</scope>
</reference>